<sequence>MSTSTTIRVSTQTRDRLAAQARERGISMSALLTELAAQAERQAIFRAEREASHAETTTQAVRDEDREWEGTVGDGLG</sequence>
<keyword id="KW-0238">DNA-binding</keyword>
<keyword id="KW-1185">Reference proteome</keyword>
<keyword id="KW-1277">Toxin-antitoxin system</keyword>
<reference key="1">
    <citation type="journal article" date="2002" name="J. Bacteriol.">
        <title>Whole-genome comparison of Mycobacterium tuberculosis clinical and laboratory strains.</title>
        <authorList>
            <person name="Fleischmann R.D."/>
            <person name="Alland D."/>
            <person name="Eisen J.A."/>
            <person name="Carpenter L."/>
            <person name="White O."/>
            <person name="Peterson J.D."/>
            <person name="DeBoy R.T."/>
            <person name="Dodson R.J."/>
            <person name="Gwinn M.L."/>
            <person name="Haft D.H."/>
            <person name="Hickey E.K."/>
            <person name="Kolonay J.F."/>
            <person name="Nelson W.C."/>
            <person name="Umayam L.A."/>
            <person name="Ermolaeva M.D."/>
            <person name="Salzberg S.L."/>
            <person name="Delcher A."/>
            <person name="Utterback T.R."/>
            <person name="Weidman J.F."/>
            <person name="Khouri H.M."/>
            <person name="Gill J."/>
            <person name="Mikula A."/>
            <person name="Bishai W."/>
            <person name="Jacobs W.R. Jr."/>
            <person name="Venter J.C."/>
            <person name="Fraser C.M."/>
        </authorList>
    </citation>
    <scope>NUCLEOTIDE SEQUENCE [LARGE SCALE GENOMIC DNA]</scope>
    <source>
        <strain>CDC 1551 / Oshkosh</strain>
    </source>
</reference>
<accession>P9WJ84</accession>
<accession>L0TA24</accession>
<accession>Q79FI0</accession>
<accession>Q8VJR2</accession>
<feature type="chain" id="PRO_0000427874" description="Putative antitoxin MazE7">
    <location>
        <begin position="1"/>
        <end position="77"/>
    </location>
</feature>
<feature type="region of interest" description="Disordered" evidence="2">
    <location>
        <begin position="49"/>
        <end position="77"/>
    </location>
</feature>
<dbReference type="EMBL" id="AE000516">
    <property type="protein sequence ID" value="AAK46402.1"/>
    <property type="molecule type" value="Genomic_DNA"/>
</dbReference>
<dbReference type="RefSeq" id="WP_003410651.1">
    <property type="nucleotide sequence ID" value="NZ_KK341227.1"/>
</dbReference>
<dbReference type="SMR" id="P9WJ84"/>
<dbReference type="KEGG" id="mtc:MT2122"/>
<dbReference type="PATRIC" id="fig|83331.31.peg.2290"/>
<dbReference type="HOGENOM" id="CLU_195257_1_0_11"/>
<dbReference type="Proteomes" id="UP000001020">
    <property type="component" value="Chromosome"/>
</dbReference>
<dbReference type="GO" id="GO:0003677">
    <property type="term" value="F:DNA binding"/>
    <property type="evidence" value="ECO:0007669"/>
    <property type="project" value="UniProtKB-KW"/>
</dbReference>
<gene>
    <name type="primary">mazE7</name>
    <name type="ordered locus">MT2122</name>
</gene>
<proteinExistence type="inferred from homology"/>
<organism>
    <name type="scientific">Mycobacterium tuberculosis (strain CDC 1551 / Oshkosh)</name>
    <dbReference type="NCBI Taxonomy" id="83331"/>
    <lineage>
        <taxon>Bacteria</taxon>
        <taxon>Bacillati</taxon>
        <taxon>Actinomycetota</taxon>
        <taxon>Actinomycetes</taxon>
        <taxon>Mycobacteriales</taxon>
        <taxon>Mycobacteriaceae</taxon>
        <taxon>Mycobacterium</taxon>
        <taxon>Mycobacterium tuberculosis complex</taxon>
    </lineage>
</organism>
<evidence type="ECO:0000250" key="1"/>
<evidence type="ECO:0000256" key="2">
    <source>
        <dbReference type="SAM" id="MobiDB-lite"/>
    </source>
</evidence>
<name>MAZE7_MYCTO</name>
<protein>
    <recommendedName>
        <fullName>Putative antitoxin MazE7</fullName>
    </recommendedName>
</protein>
<comment type="function">
    <text evidence="1">Antitoxin component of a type II toxin-antitoxin (TA) system.</text>
</comment>
<comment type="subunit">
    <text evidence="1">Forms a complex with cognate toxin MazF7.</text>
</comment>